<keyword id="KW-0007">Acetylation</keyword>
<keyword id="KW-0158">Chromosome</keyword>
<keyword id="KW-0238">DNA-binding</keyword>
<keyword id="KW-0488">Methylation</keyword>
<keyword id="KW-0544">Nucleosome core</keyword>
<keyword id="KW-0539">Nucleus</keyword>
<keyword id="KW-0597">Phosphoprotein</keyword>
<organism>
    <name type="scientific">Urechis caupo</name>
    <name type="common">Innkeeper worm</name>
    <name type="synonym">Spoonworm</name>
    <dbReference type="NCBI Taxonomy" id="6431"/>
    <lineage>
        <taxon>Eukaryota</taxon>
        <taxon>Metazoa</taxon>
        <taxon>Spiralia</taxon>
        <taxon>Lophotrochozoa</taxon>
        <taxon>Annelida</taxon>
        <taxon>Polychaeta</taxon>
        <taxon>Echiura</taxon>
        <taxon>Xenopneusta</taxon>
        <taxon>Urechidae</taxon>
        <taxon>Urechis</taxon>
    </lineage>
</organism>
<accession>P27325</accession>
<proteinExistence type="inferred from homology"/>
<feature type="initiator methionine" description="Removed" evidence="1">
    <location>
        <position position="1"/>
    </location>
</feature>
<feature type="chain" id="PRO_0000055288" description="Histone H2A">
    <location>
        <begin position="2"/>
        <end position="125"/>
    </location>
</feature>
<feature type="region of interest" description="Disordered" evidence="2">
    <location>
        <begin position="1"/>
        <end position="23"/>
    </location>
</feature>
<feature type="compositionally biased region" description="Basic residues" evidence="2">
    <location>
        <begin position="1"/>
        <end position="18"/>
    </location>
</feature>
<feature type="modified residue" description="N-acetylserine" evidence="1">
    <location>
        <position position="2"/>
    </location>
</feature>
<feature type="modified residue" description="Phosphoserine" evidence="1">
    <location>
        <position position="2"/>
    </location>
</feature>
<feature type="modified residue" description="N5-methylglutamine" evidence="1">
    <location>
        <position position="104"/>
    </location>
</feature>
<comment type="function">
    <text>Core component of nucleosome. Nucleosomes wrap and compact DNA into chromatin, limiting DNA accessibility to the cellular machineries which require DNA as a template. Histones thereby play a central role in transcription regulation, DNA repair, DNA replication and chromosomal stability. DNA accessibility is regulated via a complex set of post-translational modifications of histones, also called histone code, and nucleosome remodeling.</text>
</comment>
<comment type="subunit">
    <text>The nucleosome is a histone octamer containing two molecules each of H2A, H2B, H3 and H4 assembled in one H3-H4 heterotetramer and two H2A-H2B heterodimers. The octamer wraps approximately 147 bp of DNA.</text>
</comment>
<comment type="subcellular location">
    <subcellularLocation>
        <location>Nucleus</location>
    </subcellularLocation>
    <subcellularLocation>
        <location>Chromosome</location>
    </subcellularLocation>
</comment>
<comment type="similarity">
    <text evidence="3">Belongs to the histone H2A family.</text>
</comment>
<protein>
    <recommendedName>
        <fullName>Histone H2A</fullName>
    </recommendedName>
</protein>
<sequence length="125" mass="13440">MSGRGKGGKAKGKSKSRSSRAGLQFPVGRIHRLLRKGNYAERIGAGAPVYLAAVMEYLAAEVLELAGNAARDNKKTRIIPRHLQLAIRNDEELNKLLSGVTIAQGGVLPNIQAVLLPKKSSQKTK</sequence>
<name>H2A_URECA</name>
<evidence type="ECO:0000250" key="1"/>
<evidence type="ECO:0000256" key="2">
    <source>
        <dbReference type="SAM" id="MobiDB-lite"/>
    </source>
</evidence>
<evidence type="ECO:0000305" key="3"/>
<reference key="1">
    <citation type="journal article" date="1992" name="DNA Seq.">
        <title>Nucleotide sequence of the Urechis caupo core histone gene tandem repeat.</title>
        <authorList>
            <person name="Davis F.C."/>
            <person name="Shelton J.C."/>
            <person name="Ingham L.D."/>
        </authorList>
    </citation>
    <scope>NUCLEOTIDE SEQUENCE [GENOMIC DNA]</scope>
    <source>
        <tissue>Sperm</tissue>
    </source>
</reference>
<dbReference type="EMBL" id="X58895">
    <property type="protein sequence ID" value="CAA41697.1"/>
    <property type="molecule type" value="Genomic_DNA"/>
</dbReference>
<dbReference type="PIR" id="B56618">
    <property type="entry name" value="S21849"/>
</dbReference>
<dbReference type="SMR" id="P27325"/>
<dbReference type="GO" id="GO:0000786">
    <property type="term" value="C:nucleosome"/>
    <property type="evidence" value="ECO:0007669"/>
    <property type="project" value="UniProtKB-KW"/>
</dbReference>
<dbReference type="GO" id="GO:0005634">
    <property type="term" value="C:nucleus"/>
    <property type="evidence" value="ECO:0007669"/>
    <property type="project" value="UniProtKB-SubCell"/>
</dbReference>
<dbReference type="GO" id="GO:0003677">
    <property type="term" value="F:DNA binding"/>
    <property type="evidence" value="ECO:0007669"/>
    <property type="project" value="UniProtKB-KW"/>
</dbReference>
<dbReference type="GO" id="GO:0046982">
    <property type="term" value="F:protein heterodimerization activity"/>
    <property type="evidence" value="ECO:0007669"/>
    <property type="project" value="InterPro"/>
</dbReference>
<dbReference type="GO" id="GO:0030527">
    <property type="term" value="F:structural constituent of chromatin"/>
    <property type="evidence" value="ECO:0007669"/>
    <property type="project" value="InterPro"/>
</dbReference>
<dbReference type="CDD" id="cd00074">
    <property type="entry name" value="HFD_H2A"/>
    <property type="match status" value="1"/>
</dbReference>
<dbReference type="FunFam" id="1.10.20.10:FF:000020">
    <property type="entry name" value="Histone H2A"/>
    <property type="match status" value="1"/>
</dbReference>
<dbReference type="Gene3D" id="1.10.20.10">
    <property type="entry name" value="Histone, subunit A"/>
    <property type="match status" value="1"/>
</dbReference>
<dbReference type="InterPro" id="IPR009072">
    <property type="entry name" value="Histone-fold"/>
</dbReference>
<dbReference type="InterPro" id="IPR002119">
    <property type="entry name" value="Histone_H2A"/>
</dbReference>
<dbReference type="InterPro" id="IPR007125">
    <property type="entry name" value="Histone_H2A/H2B/H3"/>
</dbReference>
<dbReference type="InterPro" id="IPR032454">
    <property type="entry name" value="Histone_H2A_C"/>
</dbReference>
<dbReference type="InterPro" id="IPR032458">
    <property type="entry name" value="Histone_H2A_CS"/>
</dbReference>
<dbReference type="PANTHER" id="PTHR23430">
    <property type="entry name" value="HISTONE H2A"/>
    <property type="match status" value="1"/>
</dbReference>
<dbReference type="Pfam" id="PF00125">
    <property type="entry name" value="Histone"/>
    <property type="match status" value="1"/>
</dbReference>
<dbReference type="Pfam" id="PF16211">
    <property type="entry name" value="Histone_H2A_C"/>
    <property type="match status" value="1"/>
</dbReference>
<dbReference type="PRINTS" id="PR00620">
    <property type="entry name" value="HISTONEH2A"/>
</dbReference>
<dbReference type="SMART" id="SM00414">
    <property type="entry name" value="H2A"/>
    <property type="match status" value="1"/>
</dbReference>
<dbReference type="SUPFAM" id="SSF47113">
    <property type="entry name" value="Histone-fold"/>
    <property type="match status" value="1"/>
</dbReference>
<dbReference type="PROSITE" id="PS00046">
    <property type="entry name" value="HISTONE_H2A"/>
    <property type="match status" value="1"/>
</dbReference>